<gene>
    <name evidence="1" type="primary">glmS</name>
    <name type="ordered locus">FN1853</name>
</gene>
<organism>
    <name type="scientific">Fusobacterium nucleatum subsp. nucleatum (strain ATCC 25586 / DSM 15643 / BCRC 10681 / CIP 101130 / JCM 8532 / KCTC 2640 / LMG 13131 / VPI 4355)</name>
    <dbReference type="NCBI Taxonomy" id="190304"/>
    <lineage>
        <taxon>Bacteria</taxon>
        <taxon>Fusobacteriati</taxon>
        <taxon>Fusobacteriota</taxon>
        <taxon>Fusobacteriia</taxon>
        <taxon>Fusobacteriales</taxon>
        <taxon>Fusobacteriaceae</taxon>
        <taxon>Fusobacterium</taxon>
    </lineage>
</organism>
<keyword id="KW-0846">Cobalamin</keyword>
<keyword id="KW-0170">Cobalt</keyword>
<keyword id="KW-0413">Isomerase</keyword>
<keyword id="KW-0479">Metal-binding</keyword>
<keyword id="KW-1185">Reference proteome</keyword>
<name>GMSS_FUSNN</name>
<accession>Q8RHY7</accession>
<dbReference type="EC" id="5.4.99.1" evidence="1"/>
<dbReference type="EMBL" id="AE009951">
    <property type="protein sequence ID" value="AAL93952.1"/>
    <property type="molecule type" value="Genomic_DNA"/>
</dbReference>
<dbReference type="RefSeq" id="NP_602653.1">
    <property type="nucleotide sequence ID" value="NC_003454.1"/>
</dbReference>
<dbReference type="RefSeq" id="WP_005902997.1">
    <property type="nucleotide sequence ID" value="NZ_OZ209243.1"/>
</dbReference>
<dbReference type="SMR" id="Q8RHY7"/>
<dbReference type="STRING" id="190304.FN1853"/>
<dbReference type="PaxDb" id="190304-FN1853"/>
<dbReference type="EnsemblBacteria" id="AAL93952">
    <property type="protein sequence ID" value="AAL93952"/>
    <property type="gene ID" value="FN1853"/>
</dbReference>
<dbReference type="GeneID" id="79783125"/>
<dbReference type="KEGG" id="fnu:FN1853"/>
<dbReference type="PATRIC" id="fig|190304.8.peg.329"/>
<dbReference type="eggNOG" id="COG2185">
    <property type="taxonomic scope" value="Bacteria"/>
</dbReference>
<dbReference type="HOGENOM" id="CLU_136705_0_0_0"/>
<dbReference type="InParanoid" id="Q8RHY7"/>
<dbReference type="BioCyc" id="FNUC190304:G1FZS-350-MONOMER"/>
<dbReference type="UniPathway" id="UPA00561">
    <property type="reaction ID" value="UER00617"/>
</dbReference>
<dbReference type="Proteomes" id="UP000002521">
    <property type="component" value="Chromosome"/>
</dbReference>
<dbReference type="GO" id="GO:0031419">
    <property type="term" value="F:cobalamin binding"/>
    <property type="evidence" value="ECO:0007669"/>
    <property type="project" value="UniProtKB-KW"/>
</dbReference>
<dbReference type="GO" id="GO:0046872">
    <property type="term" value="F:metal ion binding"/>
    <property type="evidence" value="ECO:0007669"/>
    <property type="project" value="UniProtKB-KW"/>
</dbReference>
<dbReference type="GO" id="GO:0050097">
    <property type="term" value="F:methylaspartate mutase activity"/>
    <property type="evidence" value="ECO:0007669"/>
    <property type="project" value="UniProtKB-UniRule"/>
</dbReference>
<dbReference type="GO" id="GO:0019670">
    <property type="term" value="P:anaerobic glutamate catabolic process"/>
    <property type="evidence" value="ECO:0007669"/>
    <property type="project" value="InterPro"/>
</dbReference>
<dbReference type="GO" id="GO:0019553">
    <property type="term" value="P:glutamate catabolic process via L-citramalate"/>
    <property type="evidence" value="ECO:0007669"/>
    <property type="project" value="UniProtKB-UniRule"/>
</dbReference>
<dbReference type="CDD" id="cd02072">
    <property type="entry name" value="Glm_B12_BD"/>
    <property type="match status" value="1"/>
</dbReference>
<dbReference type="Gene3D" id="3.40.50.280">
    <property type="entry name" value="Cobalamin-binding domain"/>
    <property type="match status" value="1"/>
</dbReference>
<dbReference type="HAMAP" id="MF_00526">
    <property type="entry name" value="Me_Asp_mutase_S"/>
    <property type="match status" value="1"/>
</dbReference>
<dbReference type="InterPro" id="IPR006159">
    <property type="entry name" value="Acid_CoA_mut_C"/>
</dbReference>
<dbReference type="InterPro" id="IPR006158">
    <property type="entry name" value="Cobalamin-bd"/>
</dbReference>
<dbReference type="InterPro" id="IPR036724">
    <property type="entry name" value="Cobalamin-bd_sf"/>
</dbReference>
<dbReference type="InterPro" id="IPR006394">
    <property type="entry name" value="GlmS"/>
</dbReference>
<dbReference type="NCBIfam" id="TIGR00640">
    <property type="entry name" value="acid_CoA_mut_C"/>
    <property type="match status" value="1"/>
</dbReference>
<dbReference type="NCBIfam" id="TIGR01501">
    <property type="entry name" value="MthylAspMutase"/>
    <property type="match status" value="1"/>
</dbReference>
<dbReference type="NCBIfam" id="NF002612">
    <property type="entry name" value="PRK02261.1"/>
    <property type="match status" value="1"/>
</dbReference>
<dbReference type="Pfam" id="PF02310">
    <property type="entry name" value="B12-binding"/>
    <property type="match status" value="1"/>
</dbReference>
<dbReference type="SUPFAM" id="SSF52242">
    <property type="entry name" value="Cobalamin (vitamin B12)-binding domain"/>
    <property type="match status" value="1"/>
</dbReference>
<dbReference type="PROSITE" id="PS51332">
    <property type="entry name" value="B12_BINDING"/>
    <property type="match status" value="1"/>
</dbReference>
<proteinExistence type="inferred from homology"/>
<reference key="1">
    <citation type="journal article" date="2002" name="J. Bacteriol.">
        <title>Genome sequence and analysis of the oral bacterium Fusobacterium nucleatum strain ATCC 25586.</title>
        <authorList>
            <person name="Kapatral V."/>
            <person name="Anderson I."/>
            <person name="Ivanova N."/>
            <person name="Reznik G."/>
            <person name="Los T."/>
            <person name="Lykidis A."/>
            <person name="Bhattacharyya A."/>
            <person name="Bartman A."/>
            <person name="Gardner W."/>
            <person name="Grechkin G."/>
            <person name="Zhu L."/>
            <person name="Vasieva O."/>
            <person name="Chu L."/>
            <person name="Kogan Y."/>
            <person name="Chaga O."/>
            <person name="Goltsman E."/>
            <person name="Bernal A."/>
            <person name="Larsen N."/>
            <person name="D'Souza M."/>
            <person name="Walunas T."/>
            <person name="Pusch G."/>
            <person name="Haselkorn R."/>
            <person name="Fonstein M."/>
            <person name="Kyrpides N.C."/>
            <person name="Overbeek R."/>
        </authorList>
    </citation>
    <scope>NUCLEOTIDE SEQUENCE [LARGE SCALE GENOMIC DNA]</scope>
    <source>
        <strain>ATCC 25586 / DSM 15643 / BCRC 10681 / CIP 101130 / JCM 8532 / KCTC 2640 / LMG 13131 / VPI 4355</strain>
    </source>
</reference>
<protein>
    <recommendedName>
        <fullName evidence="1">Glutamate mutase sigma subunit</fullName>
        <ecNumber evidence="1">5.4.99.1</ecNumber>
    </recommendedName>
    <alternativeName>
        <fullName evidence="1">Glutamate mutase S chain</fullName>
    </alternativeName>
    <alternativeName>
        <fullName evidence="1">Glutamate mutase small subunit</fullName>
    </alternativeName>
    <alternativeName>
        <fullName evidence="1">Methylaspartate mutase</fullName>
    </alternativeName>
</protein>
<comment type="function">
    <text evidence="1">Catalyzes the carbon skeleton rearrangement of L-glutamate to L-threo-3-methylaspartate ((2S,3S)-3-methylaspartate).</text>
</comment>
<comment type="catalytic activity">
    <reaction evidence="1">
        <text>(2S,3S)-3-methyl-L-aspartate = L-glutamate</text>
        <dbReference type="Rhea" id="RHEA:12857"/>
        <dbReference type="ChEBI" id="CHEBI:29985"/>
        <dbReference type="ChEBI" id="CHEBI:58724"/>
        <dbReference type="EC" id="5.4.99.1"/>
    </reaction>
</comment>
<comment type="cofactor">
    <cofactor evidence="1">
        <name>adenosylcob(III)alamin</name>
        <dbReference type="ChEBI" id="CHEBI:18408"/>
    </cofactor>
</comment>
<comment type="pathway">
    <text evidence="1">Amino-acid degradation; L-glutamate degradation via mesaconate pathway; acetate and pyruvate from L-glutamate: step 1/4.</text>
</comment>
<comment type="subunit">
    <text evidence="1">Heterotetramer composed of 2 epsilon subunits (GlmE) and 2 sigma subunits (GlmS). GlmE exists as a homodimer and GlmS as a monomer.</text>
</comment>
<comment type="similarity">
    <text evidence="1">Belongs to the methylaspartate mutase GlmS subunit family.</text>
</comment>
<feature type="chain" id="PRO_0000216447" description="Glutamate mutase sigma subunit">
    <location>
        <begin position="1"/>
        <end position="136"/>
    </location>
</feature>
<feature type="domain" description="B12-binding" evidence="1">
    <location>
        <begin position="3"/>
        <end position="136"/>
    </location>
</feature>
<feature type="binding site" evidence="1">
    <location>
        <begin position="13"/>
        <end position="17"/>
    </location>
    <ligand>
        <name>adenosylcob(III)alamin</name>
        <dbReference type="ChEBI" id="CHEBI:18408"/>
    </ligand>
</feature>
<feature type="binding site" description="axial binding residue" evidence="1">
    <location>
        <position position="16"/>
    </location>
    <ligand>
        <name>adenosylcob(III)alamin</name>
        <dbReference type="ChEBI" id="CHEBI:18408"/>
    </ligand>
    <ligandPart>
        <name>Co</name>
        <dbReference type="ChEBI" id="CHEBI:27638"/>
    </ligandPart>
</feature>
<feature type="binding site" evidence="1">
    <location>
        <begin position="61"/>
        <end position="63"/>
    </location>
    <ligand>
        <name>adenosylcob(III)alamin</name>
        <dbReference type="ChEBI" id="CHEBI:18408"/>
    </ligand>
</feature>
<evidence type="ECO:0000255" key="1">
    <source>
        <dbReference type="HAMAP-Rule" id="MF_00526"/>
    </source>
</evidence>
<sequence length="136" mass="15144">MAKKKIVIGVIGSDCHTVGNKIIHNKLEESGFDVVNIGALSPQIDFINAALETNSDAIIVSSIYGYGELDCQGIREKCNEYGLKDILLYIGGNIGSSNEKWENTEKRFKEMGFDRIYKPGTPIEETIIDLKKDFKI</sequence>